<proteinExistence type="evidence at protein level"/>
<name>CBIH_SALTY</name>
<reference key="1">
    <citation type="journal article" date="1993" name="J. Bacteriol.">
        <title>Characterization of the cobalamin (vitamin B12) biosynthetic genes of Salmonella typhimurium.</title>
        <authorList>
            <person name="Roth J.R."/>
            <person name="Lawrence J.G."/>
            <person name="Rubenfield M."/>
            <person name="Kieffer-Higgins S."/>
            <person name="Church G.M."/>
        </authorList>
    </citation>
    <scope>NUCLEOTIDE SEQUENCE [GENOMIC DNA]</scope>
    <scope>PROTEIN SEQUENCE OF N-TERMINUS</scope>
    <source>
        <strain>LT2 / SGSC1412 / ATCC 700720</strain>
    </source>
</reference>
<reference key="2">
    <citation type="journal article" date="2001" name="Nature">
        <title>Complete genome sequence of Salmonella enterica serovar Typhimurium LT2.</title>
        <authorList>
            <person name="McClelland M."/>
            <person name="Sanderson K.E."/>
            <person name="Spieth J."/>
            <person name="Clifton S.W."/>
            <person name="Latreille P."/>
            <person name="Courtney L."/>
            <person name="Porwollik S."/>
            <person name="Ali J."/>
            <person name="Dante M."/>
            <person name="Du F."/>
            <person name="Hou S."/>
            <person name="Layman D."/>
            <person name="Leonard S."/>
            <person name="Nguyen C."/>
            <person name="Scott K."/>
            <person name="Holmes A."/>
            <person name="Grewal N."/>
            <person name="Mulvaney E."/>
            <person name="Ryan E."/>
            <person name="Sun H."/>
            <person name="Florea L."/>
            <person name="Miller W."/>
            <person name="Stoneking T."/>
            <person name="Nhan M."/>
            <person name="Waterston R."/>
            <person name="Wilson R.K."/>
        </authorList>
    </citation>
    <scope>NUCLEOTIDE SEQUENCE [LARGE SCALE GENOMIC DNA]</scope>
    <source>
        <strain>LT2 / SGSC1412 / ATCC 700720</strain>
    </source>
</reference>
<reference key="3">
    <citation type="journal article" date="1992" name="FEBS Lett.">
        <title>Expression of 9 Salmonella typhimurium enzymes for cobinamide synthesis. Identification of the 11-methyl and 20-methyl transferases of corrin biosynthesis.</title>
        <authorList>
            <person name="Roessner C.A."/>
            <person name="Warren M.J."/>
            <person name="Santander P.J."/>
            <person name="Atshaves B.P."/>
            <person name="Ozaki S."/>
            <person name="Stolowich N.J."/>
            <person name="Iida K."/>
            <person name="Scott A.I."/>
        </authorList>
    </citation>
    <scope>PROTEIN SEQUENCE OF 1-10</scope>
</reference>
<reference key="4">
    <citation type="journal article" date="2006" name="Bioorg. Med. Chem.">
        <title>Structural characterization of novel cobalt corrinoids synthesized by enzymes of the vitamin B12 anaerobic pathway.</title>
        <authorList>
            <person name="Santander P.J."/>
            <person name="Kajiwara Y."/>
            <person name="Williams H.J."/>
            <person name="Scott A.I."/>
        </authorList>
    </citation>
    <scope>FUNCTION</scope>
</reference>
<protein>
    <recommendedName>
        <fullName>Probable cobalt-factor III C(17)-methyltransferase</fullName>
        <ecNumber>2.1.1.-</ecNumber>
    </recommendedName>
    <alternativeName>
        <fullName>Cobalt-precorrin-3 methyltransferase</fullName>
        <shortName>Cobalt-precorrin-3 methylase</shortName>
    </alternativeName>
</protein>
<sequence>MLSVIGIGPGSQAMMTMEAIEALQAAEIVVGYKTYTHLVKAFTGDKQVIKTGMCREIERCQAAIELAQAGHNVALISSGDAGIYGMAGLVLELVSKQKLDVEVRLIPGMTASIAAASLLGAPLMHDFCHISLSDLLTPWPVIEKRIVAAGEADFVICFYNPRSRGREGHLARAFDLLAASKSAQTPVGVVKSAGRKKEEKWLTTLGDMDFEPVDMTSLVIVGNKTTYVQDGLMITPRGYTL</sequence>
<gene>
    <name type="primary">cbiH</name>
    <name type="ordered locus">STM2027</name>
</gene>
<dbReference type="EC" id="2.1.1.-"/>
<dbReference type="EMBL" id="L12006">
    <property type="protein sequence ID" value="AAA27260.1"/>
    <property type="molecule type" value="Genomic_DNA"/>
</dbReference>
<dbReference type="EMBL" id="AE006468">
    <property type="protein sequence ID" value="AAL20931.1"/>
    <property type="molecule type" value="Genomic_DNA"/>
</dbReference>
<dbReference type="RefSeq" id="NP_460972.1">
    <property type="nucleotide sequence ID" value="NC_003197.2"/>
</dbReference>
<dbReference type="RefSeq" id="WP_000953646.1">
    <property type="nucleotide sequence ID" value="NC_003197.2"/>
</dbReference>
<dbReference type="SMR" id="Q05590"/>
<dbReference type="STRING" id="99287.STM2027"/>
<dbReference type="PaxDb" id="99287-STM2027"/>
<dbReference type="GeneID" id="1253548"/>
<dbReference type="KEGG" id="stm:STM2027"/>
<dbReference type="PATRIC" id="fig|99287.12.peg.2149"/>
<dbReference type="HOGENOM" id="CLU_047948_2_0_6"/>
<dbReference type="OMA" id="VWDDRMV"/>
<dbReference type="PhylomeDB" id="Q05590"/>
<dbReference type="BioCyc" id="MetaCyc:MONOMER-13222"/>
<dbReference type="BioCyc" id="SENT99287:STM2027-MONOMER"/>
<dbReference type="UniPathway" id="UPA00148">
    <property type="reaction ID" value="UER00225"/>
</dbReference>
<dbReference type="Proteomes" id="UP000001014">
    <property type="component" value="Chromosome"/>
</dbReference>
<dbReference type="GO" id="GO:0008168">
    <property type="term" value="F:methyltransferase activity"/>
    <property type="evidence" value="ECO:0007669"/>
    <property type="project" value="UniProtKB-KW"/>
</dbReference>
<dbReference type="GO" id="GO:0009236">
    <property type="term" value="P:cobalamin biosynthetic process"/>
    <property type="evidence" value="ECO:0007669"/>
    <property type="project" value="UniProtKB-UniPathway"/>
</dbReference>
<dbReference type="GO" id="GO:0032259">
    <property type="term" value="P:methylation"/>
    <property type="evidence" value="ECO:0007669"/>
    <property type="project" value="UniProtKB-KW"/>
</dbReference>
<dbReference type="CDD" id="cd11646">
    <property type="entry name" value="Precorrin_3B_C17_MT"/>
    <property type="match status" value="1"/>
</dbReference>
<dbReference type="Gene3D" id="3.40.1010.10">
    <property type="entry name" value="Cobalt-precorrin-4 Transmethylase, Domain 1"/>
    <property type="match status" value="1"/>
</dbReference>
<dbReference type="Gene3D" id="3.30.950.10">
    <property type="entry name" value="Methyltransferase, Cobalt-precorrin-4 Transmethylase, Domain 2"/>
    <property type="match status" value="1"/>
</dbReference>
<dbReference type="InterPro" id="IPR000878">
    <property type="entry name" value="4pyrrol_Mease"/>
</dbReference>
<dbReference type="InterPro" id="IPR035996">
    <property type="entry name" value="4pyrrol_Methylase_sf"/>
</dbReference>
<dbReference type="InterPro" id="IPR014777">
    <property type="entry name" value="4pyrrole_Mease_sub1"/>
</dbReference>
<dbReference type="InterPro" id="IPR014776">
    <property type="entry name" value="4pyrrole_Mease_sub2"/>
</dbReference>
<dbReference type="InterPro" id="IPR006363">
    <property type="entry name" value="Cbl_synth_CobJ/CibH_dom"/>
</dbReference>
<dbReference type="InterPro" id="IPR051810">
    <property type="entry name" value="Precorrin_MeTrfase"/>
</dbReference>
<dbReference type="NCBIfam" id="TIGR01466">
    <property type="entry name" value="cobJ_cbiH"/>
    <property type="match status" value="1"/>
</dbReference>
<dbReference type="NCBIfam" id="NF012022">
    <property type="entry name" value="PRK15478.1"/>
    <property type="match status" value="1"/>
</dbReference>
<dbReference type="PANTHER" id="PTHR47036">
    <property type="entry name" value="COBALT-FACTOR III C(17)-METHYLTRANSFERASE-RELATED"/>
    <property type="match status" value="1"/>
</dbReference>
<dbReference type="PANTHER" id="PTHR47036:SF1">
    <property type="entry name" value="COBALT-FACTOR III C(17)-METHYLTRANSFERASE-RELATED"/>
    <property type="match status" value="1"/>
</dbReference>
<dbReference type="Pfam" id="PF00590">
    <property type="entry name" value="TP_methylase"/>
    <property type="match status" value="1"/>
</dbReference>
<dbReference type="SUPFAM" id="SSF53790">
    <property type="entry name" value="Tetrapyrrole methylase"/>
    <property type="match status" value="1"/>
</dbReference>
<evidence type="ECO:0000269" key="1">
    <source>
    </source>
</evidence>
<evidence type="ECO:0000305" key="2"/>
<organism>
    <name type="scientific">Salmonella typhimurium (strain LT2 / SGSC1412 / ATCC 700720)</name>
    <dbReference type="NCBI Taxonomy" id="99287"/>
    <lineage>
        <taxon>Bacteria</taxon>
        <taxon>Pseudomonadati</taxon>
        <taxon>Pseudomonadota</taxon>
        <taxon>Gammaproteobacteria</taxon>
        <taxon>Enterobacterales</taxon>
        <taxon>Enterobacteriaceae</taxon>
        <taxon>Salmonella</taxon>
    </lineage>
</organism>
<accession>Q05590</accession>
<comment type="function">
    <text evidence="1">Methyltransferase that likely catalyzes the ring contraction and methylation of C-17 in cobalt-factor III to form cobalt-factor IV. May also convert cobalt-precorrin-3 to cobalt-precorrin-4.</text>
</comment>
<comment type="catalytic activity">
    <reaction>
        <text>Co(II)-factor III + S-adenosyl-L-methionine + H(+) = Co(II)-factor IV + S-adenosyl-L-homocysteine</text>
        <dbReference type="Rhea" id="RHEA:45852"/>
        <dbReference type="ChEBI" id="CHEBI:15378"/>
        <dbReference type="ChEBI" id="CHEBI:57856"/>
        <dbReference type="ChEBI" id="CHEBI:59789"/>
        <dbReference type="ChEBI" id="CHEBI:73299"/>
        <dbReference type="ChEBI" id="CHEBI:85471"/>
    </reaction>
</comment>
<comment type="pathway">
    <text>Cofactor biosynthesis; adenosylcobalamin biosynthesis; cob(II)yrinate a,c-diamide from sirohydrochlorin (anaerobic route): step 3/10.</text>
</comment>
<comment type="similarity">
    <text evidence="2">Belongs to the precorrin methyltransferase family.</text>
</comment>
<feature type="chain" id="PRO_0000150401" description="Probable cobalt-factor III C(17)-methyltransferase">
    <location>
        <begin position="1"/>
        <end position="241"/>
    </location>
</feature>
<keyword id="KW-0169">Cobalamin biosynthesis</keyword>
<keyword id="KW-0903">Direct protein sequencing</keyword>
<keyword id="KW-0489">Methyltransferase</keyword>
<keyword id="KW-1185">Reference proteome</keyword>
<keyword id="KW-0949">S-adenosyl-L-methionine</keyword>
<keyword id="KW-0808">Transferase</keyword>